<comment type="function">
    <text evidence="1">Part of the Sec protein translocase complex. Interacts with the SecYEG preprotein conducting channel. Has a central role in coupling the hydrolysis of ATP to the transfer of proteins into and across the cell membrane, serving as an ATP-driven molecular motor driving the stepwise translocation of polypeptide chains across the membrane.</text>
</comment>
<comment type="catalytic activity">
    <reaction evidence="1">
        <text>ATP + H2O + cellular proteinSide 1 = ADP + phosphate + cellular proteinSide 2.</text>
        <dbReference type="EC" id="7.4.2.8"/>
    </reaction>
</comment>
<comment type="subunit">
    <text evidence="1">Monomer and homodimer. Part of the essential Sec protein translocation apparatus which comprises SecA, SecYEG and auxiliary proteins SecDF. Other proteins may also be involved.</text>
</comment>
<comment type="subcellular location">
    <subcellularLocation>
        <location evidence="1">Cell inner membrane</location>
        <topology evidence="1">Peripheral membrane protein</topology>
        <orientation evidence="1">Cytoplasmic side</orientation>
    </subcellularLocation>
    <subcellularLocation>
        <location evidence="1">Cytoplasm</location>
    </subcellularLocation>
    <text evidence="1">Distribution is 50-50.</text>
</comment>
<comment type="similarity">
    <text evidence="1">Belongs to the SecA family.</text>
</comment>
<organism>
    <name type="scientific">Aquifex aeolicus (strain VF5)</name>
    <dbReference type="NCBI Taxonomy" id="224324"/>
    <lineage>
        <taxon>Bacteria</taxon>
        <taxon>Pseudomonadati</taxon>
        <taxon>Aquificota</taxon>
        <taxon>Aquificia</taxon>
        <taxon>Aquificales</taxon>
        <taxon>Aquificaceae</taxon>
        <taxon>Aquifex</taxon>
    </lineage>
</organism>
<feature type="chain" id="PRO_0000109574" description="Protein translocase subunit SecA">
    <location>
        <begin position="1"/>
        <end position="984"/>
    </location>
</feature>
<feature type="region of interest" description="Disordered" evidence="2">
    <location>
        <begin position="930"/>
        <end position="984"/>
    </location>
</feature>
<feature type="compositionally biased region" description="Basic and acidic residues" evidence="2">
    <location>
        <begin position="930"/>
        <end position="942"/>
    </location>
</feature>
<feature type="compositionally biased region" description="Basic and acidic residues" evidence="2">
    <location>
        <begin position="952"/>
        <end position="971"/>
    </location>
</feature>
<feature type="compositionally biased region" description="Basic residues" evidence="2">
    <location>
        <begin position="972"/>
        <end position="984"/>
    </location>
</feature>
<feature type="binding site" evidence="1">
    <location>
        <position position="96"/>
    </location>
    <ligand>
        <name>ATP</name>
        <dbReference type="ChEBI" id="CHEBI:30616"/>
    </ligand>
</feature>
<feature type="binding site" evidence="1">
    <location>
        <begin position="114"/>
        <end position="118"/>
    </location>
    <ligand>
        <name>ATP</name>
        <dbReference type="ChEBI" id="CHEBI:30616"/>
    </ligand>
</feature>
<feature type="binding site" evidence="1">
    <location>
        <position position="595"/>
    </location>
    <ligand>
        <name>ATP</name>
        <dbReference type="ChEBI" id="CHEBI:30616"/>
    </ligand>
</feature>
<keyword id="KW-0067">ATP-binding</keyword>
<keyword id="KW-0997">Cell inner membrane</keyword>
<keyword id="KW-1003">Cell membrane</keyword>
<keyword id="KW-0963">Cytoplasm</keyword>
<keyword id="KW-0472">Membrane</keyword>
<keyword id="KW-0547">Nucleotide-binding</keyword>
<keyword id="KW-0653">Protein transport</keyword>
<keyword id="KW-1185">Reference proteome</keyword>
<keyword id="KW-1278">Translocase</keyword>
<keyword id="KW-0811">Translocation</keyword>
<keyword id="KW-0813">Transport</keyword>
<proteinExistence type="inferred from homology"/>
<reference key="1">
    <citation type="journal article" date="1998" name="Nature">
        <title>The complete genome of the hyperthermophilic bacterium Aquifex aeolicus.</title>
        <authorList>
            <person name="Deckert G."/>
            <person name="Warren P.V."/>
            <person name="Gaasterland T."/>
            <person name="Young W.G."/>
            <person name="Lenox A.L."/>
            <person name="Graham D.E."/>
            <person name="Overbeek R."/>
            <person name="Snead M.A."/>
            <person name="Keller M."/>
            <person name="Aujay M."/>
            <person name="Huber R."/>
            <person name="Feldman R.A."/>
            <person name="Short J.M."/>
            <person name="Olsen G.J."/>
            <person name="Swanson R.V."/>
        </authorList>
    </citation>
    <scope>NUCLEOTIDE SEQUENCE [LARGE SCALE GENOMIC DNA]</scope>
    <source>
        <strain>VF5</strain>
    </source>
</reference>
<sequence length="984" mass="113976">MLGWIAKKIIGTKNEREVKRLRKFVNQINELEKELDALTNKELVELAQELHDKIRFDEELKERVIKGEITPEVIKAFALVREAAKRTLGLRHFDVQLIGGLVLHEGKIAEMKTGEGKTLVATSPAVVNGMTDEGVHIVTVNDYLARRDAQWMGPIYKFLGLEVGVINSDGKTYLVEWVDPEKVKEAIENDVRVWPKGYYEEILPSEKVNIDAKKTYFTTLKEAEHRRKAYEAHITYGTNNEFGFDYLRDNLAFSKEEIVQVKGHNYAIVDEVDSILIDEARTPLIISGPAQIDSQIYHVADAVVRKLKKDKDFTVDEKNRTVNLTEQGIKKVEKMLGIDNLYDLKHVDLLHAILQSIRAHHLFKKDVHYIVRDGEVLIVDEFTGRVLPGRRWSDGLHQAIEVKEGVPVKEENQTLASITFQNYFKLYRKLAGMTGTAETEALEFKEIYGLDVVVIPTHKPMIRKDHPDLVFKTKEEKWERVVEEVLLNHIFGRPVLVGTVSIEDNEKLSSLLKNKKLLKEIANRNSFKRRLEETAKNLGVSPEEVQKKLEEVLKKGIPHNVLNAKHHEREAEIIAQAGRVGAVTIATNMAGRGTDILLGGNPEYLAKQMLKEKGINPEEATEEQFREALREAYRITEEEKEKVKKLGGLLVIGTERHESRRIDNQLRGRAGRQGDPGESRFIVSLEDDLLRLFGGERVSKLMDMLKIERGEPIESRMVSKALENAQKRVEAQNFQIRKRLYEFDSVMNIQRDVVYTLRRQLLEGENVHEKIKEFLKDIITQKVNELLPEDDPELWDLEPLKAFLKELTGREVEIPQVRDKEELIQKLYEELLKIYEEKEKEIGSPEAMRELERVILLNLLDNAWREHLHTLDRLREGIYLRGYAGKDPLIEYKREAYELFENMMENVKLNTLMTLFNVQIKSEEEIKEVEHEEEKKHQRLLEEAELQGVQGKSDKKPRPKTLKERLKEERLRKRKLKAKKKEQE</sequence>
<accession>O67718</accession>
<dbReference type="EC" id="7.4.2.8" evidence="1"/>
<dbReference type="EMBL" id="AE000657">
    <property type="protein sequence ID" value="AAC07677.1"/>
    <property type="molecule type" value="Genomic_DNA"/>
</dbReference>
<dbReference type="PIR" id="D70461">
    <property type="entry name" value="D70461"/>
</dbReference>
<dbReference type="RefSeq" id="NP_214286.1">
    <property type="nucleotide sequence ID" value="NC_000918.1"/>
</dbReference>
<dbReference type="RefSeq" id="WP_010881222.1">
    <property type="nucleotide sequence ID" value="NC_000918.1"/>
</dbReference>
<dbReference type="SMR" id="O67718"/>
<dbReference type="FunCoup" id="O67718">
    <property type="interactions" value="487"/>
</dbReference>
<dbReference type="STRING" id="224324.aq_1870"/>
<dbReference type="EnsemblBacteria" id="AAC07677">
    <property type="protein sequence ID" value="AAC07677"/>
    <property type="gene ID" value="aq_1870"/>
</dbReference>
<dbReference type="KEGG" id="aae:aq_1870"/>
<dbReference type="PATRIC" id="fig|224324.8.peg.1450"/>
<dbReference type="eggNOG" id="COG0653">
    <property type="taxonomic scope" value="Bacteria"/>
</dbReference>
<dbReference type="HOGENOM" id="CLU_005314_3_0_0"/>
<dbReference type="InParanoid" id="O67718"/>
<dbReference type="OrthoDB" id="9805579at2"/>
<dbReference type="Proteomes" id="UP000000798">
    <property type="component" value="Chromosome"/>
</dbReference>
<dbReference type="GO" id="GO:0031522">
    <property type="term" value="C:cell envelope Sec protein transport complex"/>
    <property type="evidence" value="ECO:0000318"/>
    <property type="project" value="GO_Central"/>
</dbReference>
<dbReference type="GO" id="GO:0005737">
    <property type="term" value="C:cytoplasm"/>
    <property type="evidence" value="ECO:0007669"/>
    <property type="project" value="UniProtKB-SubCell"/>
</dbReference>
<dbReference type="GO" id="GO:0005886">
    <property type="term" value="C:plasma membrane"/>
    <property type="evidence" value="ECO:0000318"/>
    <property type="project" value="GO_Central"/>
</dbReference>
<dbReference type="GO" id="GO:0005524">
    <property type="term" value="F:ATP binding"/>
    <property type="evidence" value="ECO:0000318"/>
    <property type="project" value="GO_Central"/>
</dbReference>
<dbReference type="GO" id="GO:0008564">
    <property type="term" value="F:protein-exporting ATPase activity"/>
    <property type="evidence" value="ECO:0007669"/>
    <property type="project" value="UniProtKB-EC"/>
</dbReference>
<dbReference type="GO" id="GO:0065002">
    <property type="term" value="P:intracellular protein transmembrane transport"/>
    <property type="evidence" value="ECO:0007669"/>
    <property type="project" value="UniProtKB-UniRule"/>
</dbReference>
<dbReference type="GO" id="GO:0017038">
    <property type="term" value="P:protein import"/>
    <property type="evidence" value="ECO:0007669"/>
    <property type="project" value="InterPro"/>
</dbReference>
<dbReference type="GO" id="GO:0006605">
    <property type="term" value="P:protein targeting"/>
    <property type="evidence" value="ECO:0007669"/>
    <property type="project" value="UniProtKB-UniRule"/>
</dbReference>
<dbReference type="GO" id="GO:0043952">
    <property type="term" value="P:protein transport by the Sec complex"/>
    <property type="evidence" value="ECO:0000318"/>
    <property type="project" value="GO_Central"/>
</dbReference>
<dbReference type="CDD" id="cd17928">
    <property type="entry name" value="DEXDc_SecA"/>
    <property type="match status" value="1"/>
</dbReference>
<dbReference type="CDD" id="cd18803">
    <property type="entry name" value="SF2_C_secA"/>
    <property type="match status" value="1"/>
</dbReference>
<dbReference type="FunFam" id="3.40.50.300:FF:000113">
    <property type="entry name" value="Preprotein translocase subunit SecA"/>
    <property type="match status" value="1"/>
</dbReference>
<dbReference type="FunFam" id="1.10.3060.10:FF:000003">
    <property type="entry name" value="Protein translocase subunit SecA"/>
    <property type="match status" value="1"/>
</dbReference>
<dbReference type="Gene3D" id="1.10.3060.10">
    <property type="entry name" value="Helical scaffold and wing domains of SecA"/>
    <property type="match status" value="1"/>
</dbReference>
<dbReference type="Gene3D" id="3.40.50.300">
    <property type="entry name" value="P-loop containing nucleotide triphosphate hydrolases"/>
    <property type="match status" value="3"/>
</dbReference>
<dbReference type="HAMAP" id="MF_01382">
    <property type="entry name" value="SecA"/>
    <property type="match status" value="1"/>
</dbReference>
<dbReference type="InterPro" id="IPR014001">
    <property type="entry name" value="Helicase_ATP-bd"/>
</dbReference>
<dbReference type="InterPro" id="IPR027417">
    <property type="entry name" value="P-loop_NTPase"/>
</dbReference>
<dbReference type="InterPro" id="IPR000185">
    <property type="entry name" value="SecA"/>
</dbReference>
<dbReference type="InterPro" id="IPR020937">
    <property type="entry name" value="SecA_CS"/>
</dbReference>
<dbReference type="InterPro" id="IPR011115">
    <property type="entry name" value="SecA_DEAD"/>
</dbReference>
<dbReference type="InterPro" id="IPR014018">
    <property type="entry name" value="SecA_motor_DEAD"/>
</dbReference>
<dbReference type="InterPro" id="IPR011130">
    <property type="entry name" value="SecA_preprotein_X-link_dom"/>
</dbReference>
<dbReference type="InterPro" id="IPR044722">
    <property type="entry name" value="SecA_SF2_C"/>
</dbReference>
<dbReference type="InterPro" id="IPR011116">
    <property type="entry name" value="SecA_Wing/Scaffold"/>
</dbReference>
<dbReference type="InterPro" id="IPR036266">
    <property type="entry name" value="SecA_Wing/Scaffold_sf"/>
</dbReference>
<dbReference type="InterPro" id="IPR036670">
    <property type="entry name" value="SecA_X-link_sf"/>
</dbReference>
<dbReference type="PANTHER" id="PTHR30612:SF0">
    <property type="entry name" value="CHLOROPLAST PROTEIN-TRANSPORTING ATPASE"/>
    <property type="match status" value="1"/>
</dbReference>
<dbReference type="PANTHER" id="PTHR30612">
    <property type="entry name" value="SECA INNER MEMBRANE COMPONENT OF SEC PROTEIN SECRETION SYSTEM"/>
    <property type="match status" value="1"/>
</dbReference>
<dbReference type="Pfam" id="PF21090">
    <property type="entry name" value="P-loop_SecA"/>
    <property type="match status" value="1"/>
</dbReference>
<dbReference type="Pfam" id="PF07517">
    <property type="entry name" value="SecA_DEAD"/>
    <property type="match status" value="1"/>
</dbReference>
<dbReference type="Pfam" id="PF01043">
    <property type="entry name" value="SecA_PP_bind"/>
    <property type="match status" value="1"/>
</dbReference>
<dbReference type="Pfam" id="PF07516">
    <property type="entry name" value="SecA_SW"/>
    <property type="match status" value="1"/>
</dbReference>
<dbReference type="PRINTS" id="PR00906">
    <property type="entry name" value="SECA"/>
</dbReference>
<dbReference type="SMART" id="SM00957">
    <property type="entry name" value="SecA_DEAD"/>
    <property type="match status" value="1"/>
</dbReference>
<dbReference type="SMART" id="SM00958">
    <property type="entry name" value="SecA_PP_bind"/>
    <property type="match status" value="1"/>
</dbReference>
<dbReference type="SUPFAM" id="SSF81886">
    <property type="entry name" value="Helical scaffold and wing domains of SecA"/>
    <property type="match status" value="1"/>
</dbReference>
<dbReference type="SUPFAM" id="SSF52540">
    <property type="entry name" value="P-loop containing nucleoside triphosphate hydrolases"/>
    <property type="match status" value="2"/>
</dbReference>
<dbReference type="SUPFAM" id="SSF81767">
    <property type="entry name" value="Pre-protein crosslinking domain of SecA"/>
    <property type="match status" value="1"/>
</dbReference>
<dbReference type="PROSITE" id="PS01312">
    <property type="entry name" value="SECA"/>
    <property type="match status" value="1"/>
</dbReference>
<dbReference type="PROSITE" id="PS51196">
    <property type="entry name" value="SECA_MOTOR_DEAD"/>
    <property type="match status" value="1"/>
</dbReference>
<gene>
    <name evidence="1" type="primary">secA</name>
    <name type="ordered locus">aq_1870</name>
</gene>
<protein>
    <recommendedName>
        <fullName evidence="1">Protein translocase subunit SecA</fullName>
        <ecNumber evidence="1">7.4.2.8</ecNumber>
    </recommendedName>
</protein>
<name>SECA_AQUAE</name>
<evidence type="ECO:0000255" key="1">
    <source>
        <dbReference type="HAMAP-Rule" id="MF_01382"/>
    </source>
</evidence>
<evidence type="ECO:0000256" key="2">
    <source>
        <dbReference type="SAM" id="MobiDB-lite"/>
    </source>
</evidence>